<accession>P75987</accession>
<accession>Q2MBH3</accession>
<organism>
    <name type="scientific">Escherichia coli (strain K12)</name>
    <dbReference type="NCBI Taxonomy" id="83333"/>
    <lineage>
        <taxon>Bacteria</taxon>
        <taxon>Pseudomonadati</taxon>
        <taxon>Pseudomonadota</taxon>
        <taxon>Gammaproteobacteria</taxon>
        <taxon>Enterobacterales</taxon>
        <taxon>Enterobacteriaceae</taxon>
        <taxon>Escherichia</taxon>
    </lineage>
</organism>
<reference key="1">
    <citation type="journal article" date="1997" name="Science">
        <title>The complete genome sequence of Escherichia coli K-12.</title>
        <authorList>
            <person name="Blattner F.R."/>
            <person name="Plunkett G. III"/>
            <person name="Bloch C.A."/>
            <person name="Perna N.T."/>
            <person name="Burland V."/>
            <person name="Riley M."/>
            <person name="Collado-Vides J."/>
            <person name="Glasner J.D."/>
            <person name="Rode C.K."/>
            <person name="Mayhew G.F."/>
            <person name="Gregor J."/>
            <person name="Davis N.W."/>
            <person name="Kirkpatrick H.A."/>
            <person name="Goeden M.A."/>
            <person name="Rose D.J."/>
            <person name="Mau B."/>
            <person name="Shao Y."/>
        </authorList>
    </citation>
    <scope>NUCLEOTIDE SEQUENCE [LARGE SCALE GENOMIC DNA]</scope>
    <source>
        <strain>K12 / MG1655 / ATCC 47076</strain>
    </source>
</reference>
<reference key="2">
    <citation type="journal article" date="2006" name="Mol. Syst. Biol.">
        <title>Highly accurate genome sequences of Escherichia coli K-12 strains MG1655 and W3110.</title>
        <authorList>
            <person name="Hayashi K."/>
            <person name="Morooka N."/>
            <person name="Yamamoto Y."/>
            <person name="Fujita K."/>
            <person name="Isono K."/>
            <person name="Choi S."/>
            <person name="Ohtsubo E."/>
            <person name="Baba T."/>
            <person name="Wanner B.L."/>
            <person name="Mori H."/>
            <person name="Horiuchi T."/>
        </authorList>
    </citation>
    <scope>NUCLEOTIDE SEQUENCE [LARGE SCALE GENOMIC DNA]</scope>
    <source>
        <strain>K12 / W3110 / ATCC 27325 / DSM 5911</strain>
    </source>
</reference>
<reference key="3">
    <citation type="journal article" date="1998" name="J. Biochem.">
        <title>Identification of genes affecting lycopene formation in Escherichia coli transformed with carotenoid biosynthetic genes: candidates for early genes in isoprenoid biosynthesis.</title>
        <authorList>
            <person name="Hemmi H."/>
            <person name="Ohnuma S."/>
            <person name="Nagaoka K."/>
            <person name="Nishino T."/>
        </authorList>
    </citation>
    <scope>POSSIBLE FUNCTION</scope>
</reference>
<reference key="4">
    <citation type="journal article" date="2004" name="Mol. Microbiol.">
        <title>Identification of mutator genes and mutational pathways in Escherichia coli using a multicopy cloning approach.</title>
        <authorList>
            <person name="Yang H."/>
            <person name="Wolff E."/>
            <person name="Kim M."/>
            <person name="Diep A."/>
            <person name="Miller J.H."/>
        </authorList>
    </citation>
    <scope>MUTATOR PHENOTYPE</scope>
</reference>
<reference key="5">
    <citation type="journal article" date="2008" name="Mol. Microbiol.">
        <title>Multiple pathways for regulation of sigmaS (RpoS) stability in Escherichia coli via the action of multiple anti-adaptors.</title>
        <authorList>
            <person name="Bougdour A."/>
            <person name="Cunning C."/>
            <person name="Baptiste P.J."/>
            <person name="Elliott T."/>
            <person name="Gottesman S."/>
        </authorList>
    </citation>
    <scope>FUNCTION IN THE STABILIZATION OF RPOS</scope>
    <scope>INDUCTION</scope>
    <source>
        <strain>K12 / MG1655 / ATCC 47076</strain>
    </source>
</reference>
<name>IRAM_ECOLI</name>
<feature type="chain" id="PRO_0000086951" description="Anti-adapter protein IraM">
    <location>
        <begin position="1"/>
        <end position="107"/>
    </location>
</feature>
<feature type="strand" evidence="3">
    <location>
        <begin position="3"/>
        <end position="11"/>
    </location>
</feature>
<feature type="turn" evidence="3">
    <location>
        <begin position="12"/>
        <end position="15"/>
    </location>
</feature>
<feature type="strand" evidence="3">
    <location>
        <begin position="16"/>
        <end position="32"/>
    </location>
</feature>
<feature type="strand" evidence="3">
    <location>
        <begin position="42"/>
        <end position="46"/>
    </location>
</feature>
<feature type="strand" evidence="3">
    <location>
        <begin position="49"/>
        <end position="52"/>
    </location>
</feature>
<feature type="strand" evidence="3">
    <location>
        <begin position="55"/>
        <end position="57"/>
    </location>
</feature>
<feature type="strand" evidence="3">
    <location>
        <begin position="61"/>
        <end position="66"/>
    </location>
</feature>
<feature type="helix" evidence="3">
    <location>
        <begin position="69"/>
        <end position="76"/>
    </location>
</feature>
<protein>
    <recommendedName>
        <fullName>Anti-adapter protein IraM</fullName>
    </recommendedName>
    <alternativeName>
        <fullName>Enhancing lycopene biosynthesis protein 1</fullName>
    </alternativeName>
</protein>
<evidence type="ECO:0000269" key="1">
    <source>
    </source>
</evidence>
<evidence type="ECO:0000305" key="2"/>
<evidence type="ECO:0007829" key="3">
    <source>
        <dbReference type="PDB" id="8TWD"/>
    </source>
</evidence>
<proteinExistence type="evidence at protein level"/>
<keyword id="KW-0002">3D-structure</keyword>
<keyword id="KW-0963">Cytoplasm</keyword>
<keyword id="KW-1185">Reference proteome</keyword>
<keyword id="KW-0346">Stress response</keyword>
<sequence>MKWIVIDTVIQPTCGISFSAIWGNMKMIIWYQSTIFLPPGSIFTPVKSGIILKDKEYPITIYHIAPFNKDLWSLLKSSQECPPGESKITNKCLHNSCIIKICPYGLK</sequence>
<comment type="function">
    <text evidence="1">Inhibits RpoS proteolysis by regulating RssB activity, thereby increasing the stability of the sigma stress factor RpoS during magnesium starvation. May also be involved in the early steps of isoprenoid biosynthesis, possibly through its role as RssB regulator.</text>
</comment>
<comment type="interaction">
    <interactant intactId="EBI-6479798">
        <id>P75987</id>
    </interactant>
    <interactant intactId="EBI-1122979">
        <id>P0AEV1</id>
        <label>rssB</label>
    </interactant>
    <organismsDiffer>false</organismsDiffer>
    <experiments>2</experiments>
</comment>
<comment type="subcellular location">
    <subcellularLocation>
        <location evidence="2">Cytoplasm</location>
    </subcellularLocation>
</comment>
<comment type="induction">
    <text evidence="1">By magnesium and calcium starvation, via the transcriptional regulator PhoP.</text>
</comment>
<comment type="similarity">
    <text evidence="2">Belongs to the IraM/RssC family.</text>
</comment>
<dbReference type="EMBL" id="U00096">
    <property type="protein sequence ID" value="AAC74244.1"/>
    <property type="molecule type" value="Genomic_DNA"/>
</dbReference>
<dbReference type="EMBL" id="AP009048">
    <property type="protein sequence ID" value="BAE76383.1"/>
    <property type="molecule type" value="Genomic_DNA"/>
</dbReference>
<dbReference type="PIR" id="E64861">
    <property type="entry name" value="E64861"/>
</dbReference>
<dbReference type="RefSeq" id="NP_415678.1">
    <property type="nucleotide sequence ID" value="NC_000913.3"/>
</dbReference>
<dbReference type="RefSeq" id="WP_001295666.1">
    <property type="nucleotide sequence ID" value="NZ_SSZK01000010.1"/>
</dbReference>
<dbReference type="PDB" id="8TWD">
    <property type="method" value="X-ray"/>
    <property type="resolution" value="3.30 A"/>
    <property type="chains" value="A/B=1-78"/>
</dbReference>
<dbReference type="PDBsum" id="8TWD"/>
<dbReference type="SMR" id="P75987"/>
<dbReference type="BioGRID" id="4262861">
    <property type="interactions" value="12"/>
</dbReference>
<dbReference type="FunCoup" id="P75987">
    <property type="interactions" value="4"/>
</dbReference>
<dbReference type="IntAct" id="P75987">
    <property type="interactions" value="1"/>
</dbReference>
<dbReference type="STRING" id="511145.b1160"/>
<dbReference type="PaxDb" id="511145-b1160"/>
<dbReference type="EnsemblBacteria" id="AAC74244">
    <property type="protein sequence ID" value="AAC74244"/>
    <property type="gene ID" value="b1160"/>
</dbReference>
<dbReference type="GeneID" id="945729"/>
<dbReference type="KEGG" id="ecj:JW1147"/>
<dbReference type="KEGG" id="eco:b1160"/>
<dbReference type="KEGG" id="ecoc:C3026_06835"/>
<dbReference type="PATRIC" id="fig|83333.103.peg.1949"/>
<dbReference type="EchoBASE" id="EB3644"/>
<dbReference type="eggNOG" id="ENOG50331R2">
    <property type="taxonomic scope" value="Bacteria"/>
</dbReference>
<dbReference type="HOGENOM" id="CLU_143527_1_0_6"/>
<dbReference type="InParanoid" id="P75987"/>
<dbReference type="OMA" id="FSAIWGD"/>
<dbReference type="OrthoDB" id="6555626at2"/>
<dbReference type="PhylomeDB" id="P75987"/>
<dbReference type="BioCyc" id="EcoCyc:G6600-MONOMER"/>
<dbReference type="PRO" id="PR:P75987"/>
<dbReference type="Proteomes" id="UP000000625">
    <property type="component" value="Chromosome"/>
</dbReference>
<dbReference type="GO" id="GO:0005737">
    <property type="term" value="C:cytoplasm"/>
    <property type="evidence" value="ECO:0007669"/>
    <property type="project" value="UniProtKB-SubCell"/>
</dbReference>
<dbReference type="GO" id="GO:0043856">
    <property type="term" value="F:anti-sigma factor antagonist activity"/>
    <property type="evidence" value="ECO:0000314"/>
    <property type="project" value="EcoCyc"/>
</dbReference>
<dbReference type="GO" id="GO:0071468">
    <property type="term" value="P:cellular response to acidic pH"/>
    <property type="evidence" value="ECO:0000315"/>
    <property type="project" value="EcoCyc"/>
</dbReference>
<dbReference type="GO" id="GO:0010350">
    <property type="term" value="P:cellular response to magnesium starvation"/>
    <property type="evidence" value="ECO:0000315"/>
    <property type="project" value="EcoCyc"/>
</dbReference>
<dbReference type="GO" id="GO:0042177">
    <property type="term" value="P:negative regulation of protein catabolic process"/>
    <property type="evidence" value="ECO:0000314"/>
    <property type="project" value="EcoCyc"/>
</dbReference>
<dbReference type="FunFam" id="2.40.50.650:FF:000001">
    <property type="entry name" value="Anti-adapter protein IraM"/>
    <property type="match status" value="1"/>
</dbReference>
<dbReference type="Gene3D" id="2.40.50.650">
    <property type="match status" value="1"/>
</dbReference>
<dbReference type="HAMAP" id="MF_01199">
    <property type="entry name" value="Anti_adapt_IraM"/>
    <property type="match status" value="1"/>
</dbReference>
<dbReference type="InterPro" id="IPR014448">
    <property type="entry name" value="Anti-adapter_IraM"/>
</dbReference>
<dbReference type="InterPro" id="IPR038679">
    <property type="entry name" value="PmrD_sf"/>
</dbReference>
<dbReference type="NCBIfam" id="NF007393">
    <property type="entry name" value="PRK09919.1"/>
    <property type="match status" value="1"/>
</dbReference>
<dbReference type="PIRSF" id="PIRSF007036">
    <property type="entry name" value="Elb1"/>
    <property type="match status" value="1"/>
</dbReference>
<gene>
    <name type="primary">iraM</name>
    <name type="synonym">elb1</name>
    <name type="synonym">elbA</name>
    <name type="synonym">ycgW</name>
    <name type="ordered locus">b1160</name>
    <name type="ordered locus">JW1147</name>
</gene>